<reference key="1">
    <citation type="journal article" date="2009" name="Genome Res.">
        <title>Genome structure of a Saccharomyces cerevisiae strain widely used in bioethanol production.</title>
        <authorList>
            <person name="Argueso J.L."/>
            <person name="Carazzolle M.F."/>
            <person name="Mieczkowski P.A."/>
            <person name="Duarte F.M."/>
            <person name="Netto O.V.C."/>
            <person name="Missawa S.K."/>
            <person name="Galzerani F."/>
            <person name="Costa G.G.L."/>
            <person name="Vidal R.O."/>
            <person name="Noronha M.F."/>
            <person name="Dominska M."/>
            <person name="Andrietta M.G.S."/>
            <person name="Andrietta S.R."/>
            <person name="Cunha A.F."/>
            <person name="Gomes L.H."/>
            <person name="Tavares F.C.A."/>
            <person name="Alcarde A.R."/>
            <person name="Dietrich F.S."/>
            <person name="McCusker J.H."/>
            <person name="Petes T.D."/>
            <person name="Pereira G.A.G."/>
        </authorList>
    </citation>
    <scope>NUCLEOTIDE SEQUENCE [LARGE SCALE GENOMIC DNA]</scope>
    <source>
        <strain>JAY291</strain>
    </source>
</reference>
<gene>
    <name type="primary">RRG1</name>
    <name type="ORF">C1Q_04552</name>
</gene>
<evidence type="ECO:0000250" key="1"/>
<evidence type="ECO:0000305" key="2"/>
<proteinExistence type="inferred from homology"/>
<accession>C7GVS1</accession>
<dbReference type="EMBL" id="ACFL01000358">
    <property type="protein sequence ID" value="EEU05105.1"/>
    <property type="molecule type" value="Genomic_DNA"/>
</dbReference>
<dbReference type="SMR" id="C7GVS1"/>
<dbReference type="Proteomes" id="UP000008073">
    <property type="component" value="Unassembled WGS sequence"/>
</dbReference>
<dbReference type="GO" id="GO:0005739">
    <property type="term" value="C:mitochondrion"/>
    <property type="evidence" value="ECO:0007669"/>
    <property type="project" value="UniProtKB-SubCell"/>
</dbReference>
<organism>
    <name type="scientific">Saccharomyces cerevisiae (strain JAY291)</name>
    <name type="common">Baker's yeast</name>
    <dbReference type="NCBI Taxonomy" id="574961"/>
    <lineage>
        <taxon>Eukaryota</taxon>
        <taxon>Fungi</taxon>
        <taxon>Dikarya</taxon>
        <taxon>Ascomycota</taxon>
        <taxon>Saccharomycotina</taxon>
        <taxon>Saccharomycetes</taxon>
        <taxon>Saccharomycetales</taxon>
        <taxon>Saccharomycetaceae</taxon>
        <taxon>Saccharomyces</taxon>
    </lineage>
</organism>
<comment type="function">
    <text evidence="1">Essential for respiratory growth and required for mitochondrial protein synthesis. Required for vacuolar acidification (By similarity).</text>
</comment>
<comment type="subcellular location">
    <subcellularLocation>
        <location evidence="1">Mitochondrion</location>
    </subcellularLocation>
</comment>
<comment type="PTM">
    <text evidence="1">N-glycosylated. Glycosylation is important for correct localization of the protein (By similarity).</text>
</comment>
<comment type="similarity">
    <text evidence="2">Belongs to the RRG1 family.</text>
</comment>
<sequence>MAQNFGKIPSHKSYVLSLYRTVLRNIPKCCHSYAFQYEIKKTLSKQLFKHKHDKSSWSVYTLLNEFSLLNNCLLEGKLQEIKNLMKPLKKMKKQLETTKILNSLTSLGDVKTNDPEEVRRFHVLSAYIKRKQDLGLLPAYIPKTYQHKLLLPLALNEHACLKLFHIQQKLKNGPPSAGLSYTKEGRNQIWFVRSPINKGRQQSKKLGILIRKERKDSQKNIDNLNFCEINAAWALHEAIWEEYLESKKIIKVNLPKYLEYAANIPKSTKCNPSSQYQKIKEWVDPVREIMFELHSKSFQRVEYFNKYKEKLLKNGGQLAYFDKKSKEMYAKRLTLFRKMSKETLPYVTLFIEGRDLPSVLAKYGF</sequence>
<keyword id="KW-0325">Glycoprotein</keyword>
<keyword id="KW-0496">Mitochondrion</keyword>
<protein>
    <recommendedName>
        <fullName>Required for respiratory growth protein 1, mitochondrial</fullName>
    </recommendedName>
</protein>
<name>RRG1_YEAS2</name>
<feature type="chain" id="PRO_0000402249" description="Required for respiratory growth protein 1, mitochondrial">
    <location>
        <begin position="1"/>
        <end position="365"/>
    </location>
</feature>